<name>FAD6E_BRAJU</name>
<reference key="1">
    <citation type="online journal article" date="1995" name="Plant Gene Register">
        <title>Nucleotide sequence of a cDNA from Brassica juncea encoding a microsomal omega-6 desaturase.</title>
        <authorList>
            <person name="Singh S.P."/>
            <person name="van der Heide T."/>
            <person name="McKinney S."/>
            <person name="Green A."/>
        </authorList>
        <locator>PGR95-107</locator>
    </citation>
    <scope>NUCLEOTIDE SEQUENCE [MRNA]</scope>
    <source>
        <strain>cv. 651-2-5-7-4</strain>
    </source>
</reference>
<comment type="function">
    <text evidence="1">ER (microsomal) omega-6 fatty acid desaturase introduces the second double bond in the biosynthesis of 18:3 fatty acids, important constituents of plant membranes. It is thought to use cytochrome b5 as an electron donor and to act on fatty acids esterified to phosphatidylcholine and, possibly, other phospholipids (By similarity).</text>
</comment>
<comment type="pathway">
    <text>Lipid metabolism; polyunsaturated fatty acid biosynthesis.</text>
</comment>
<comment type="subcellular location">
    <subcellularLocation>
        <location>Endoplasmic reticulum membrane</location>
        <topology>Multi-pass membrane protein</topology>
    </subcellularLocation>
</comment>
<comment type="domain">
    <text>The histidine box domains may contain the active site and/or be involved in metal ion binding.</text>
</comment>
<comment type="similarity">
    <text evidence="4">Belongs to the fatty acid desaturase type 1 family.</text>
</comment>
<keyword id="KW-0256">Endoplasmic reticulum</keyword>
<keyword id="KW-0275">Fatty acid biosynthesis</keyword>
<keyword id="KW-0276">Fatty acid metabolism</keyword>
<keyword id="KW-0444">Lipid biosynthesis</keyword>
<keyword id="KW-0443">Lipid metabolism</keyword>
<keyword id="KW-0472">Membrane</keyword>
<keyword id="KW-0560">Oxidoreductase</keyword>
<keyword id="KW-0812">Transmembrane</keyword>
<keyword id="KW-1133">Transmembrane helix</keyword>
<protein>
    <recommendedName>
        <fullName>Omega-6 fatty acid desaturase, endoplasmic reticulum</fullName>
        <ecNumber>1.14.19.-</ecNumber>
    </recommendedName>
    <alternativeName>
        <fullName>Delta(12) desaturase</fullName>
    </alternativeName>
</protein>
<sequence length="384" mass="44315">MGAGGRMQVSPSPKKSETDTLKRVPCETPPFTVGELKKAIPPHCFKRSIPRSFSYLIWDIIVASCFYYVATTYFPLLPHPLSYVAWPLYWACQGVVLTGVWVIAHECGHHAFSDYQWLDDTVGLIFHSFLLVPYFSWKYSHRRHHSNTGSLERDEVFVPKKKSDIKWYGKYLNNPLGRTVMLTVQFTLGWPLYWAFNVSGRPYPEGFACHFHPNAPIYNDRERLQIYVSDAGILAVCYGLYRYAAAQGVASMVCLYGVPLLIVNAFLVLITYLQHTHPSLPHYDSSEWDWLRGALATVDRDYGILNKVFHNITDTHVAHHLFSTMPHYHAMEVTKAIKPILGDYYQFDGTPWVKAMWREAKECIYVEPDRQGEKKGVFWYNNKL</sequence>
<organism>
    <name type="scientific">Brassica juncea</name>
    <name type="common">Indian mustard</name>
    <name type="synonym">Sinapis juncea</name>
    <dbReference type="NCBI Taxonomy" id="3707"/>
    <lineage>
        <taxon>Eukaryota</taxon>
        <taxon>Viridiplantae</taxon>
        <taxon>Streptophyta</taxon>
        <taxon>Embryophyta</taxon>
        <taxon>Tracheophyta</taxon>
        <taxon>Spermatophyta</taxon>
        <taxon>Magnoliopsida</taxon>
        <taxon>eudicotyledons</taxon>
        <taxon>Gunneridae</taxon>
        <taxon>Pentapetalae</taxon>
        <taxon>rosids</taxon>
        <taxon>malvids</taxon>
        <taxon>Brassicales</taxon>
        <taxon>Brassicaceae</taxon>
        <taxon>Brassiceae</taxon>
        <taxon>Brassica</taxon>
    </lineage>
</organism>
<accession>Q39287</accession>
<dbReference type="EC" id="1.14.19.-"/>
<dbReference type="EMBL" id="X91139">
    <property type="protein sequence ID" value="CAA62578.1"/>
    <property type="molecule type" value="mRNA"/>
</dbReference>
<dbReference type="SMR" id="Q39287"/>
<dbReference type="UniPathway" id="UPA00658"/>
<dbReference type="GO" id="GO:0005789">
    <property type="term" value="C:endoplasmic reticulum membrane"/>
    <property type="evidence" value="ECO:0007669"/>
    <property type="project" value="UniProtKB-SubCell"/>
</dbReference>
<dbReference type="GO" id="GO:0016491">
    <property type="term" value="F:oxidoreductase activity"/>
    <property type="evidence" value="ECO:0007669"/>
    <property type="project" value="UniProtKB-KW"/>
</dbReference>
<dbReference type="GO" id="GO:0006636">
    <property type="term" value="P:unsaturated fatty acid biosynthetic process"/>
    <property type="evidence" value="ECO:0007669"/>
    <property type="project" value="UniProtKB-UniPathway"/>
</dbReference>
<dbReference type="CDD" id="cd03507">
    <property type="entry name" value="Delta12-FADS-like"/>
    <property type="match status" value="1"/>
</dbReference>
<dbReference type="InterPro" id="IPR005804">
    <property type="entry name" value="FA_desaturase_dom"/>
</dbReference>
<dbReference type="InterPro" id="IPR012171">
    <property type="entry name" value="Fatty_acid_desaturase"/>
</dbReference>
<dbReference type="PANTHER" id="PTHR32100">
    <property type="entry name" value="OMEGA-6 FATTY ACID DESATURASE, CHLOROPLASTIC"/>
    <property type="match status" value="1"/>
</dbReference>
<dbReference type="Pfam" id="PF00487">
    <property type="entry name" value="FA_desaturase"/>
    <property type="match status" value="1"/>
</dbReference>
<proteinExistence type="evidence at transcript level"/>
<evidence type="ECO:0000250" key="1"/>
<evidence type="ECO:0000255" key="2"/>
<evidence type="ECO:0000256" key="3">
    <source>
        <dbReference type="SAM" id="MobiDB-lite"/>
    </source>
</evidence>
<evidence type="ECO:0000305" key="4"/>
<feature type="chain" id="PRO_0000185419" description="Omega-6 fatty acid desaturase, endoplasmic reticulum">
    <location>
        <begin position="1"/>
        <end position="384"/>
    </location>
</feature>
<feature type="transmembrane region" description="Helical" evidence="2">
    <location>
        <begin position="56"/>
        <end position="76"/>
    </location>
</feature>
<feature type="transmembrane region" description="Helical" evidence="2">
    <location>
        <begin position="84"/>
        <end position="104"/>
    </location>
</feature>
<feature type="transmembrane region" description="Helical" evidence="2">
    <location>
        <begin position="117"/>
        <end position="137"/>
    </location>
</feature>
<feature type="transmembrane region" description="Helical" evidence="2">
    <location>
        <begin position="180"/>
        <end position="200"/>
    </location>
</feature>
<feature type="transmembrane region" description="Helical" evidence="2">
    <location>
        <begin position="226"/>
        <end position="246"/>
    </location>
</feature>
<feature type="transmembrane region" description="Helical" evidence="2">
    <location>
        <begin position="253"/>
        <end position="273"/>
    </location>
</feature>
<feature type="region of interest" description="Disordered" evidence="3">
    <location>
        <begin position="1"/>
        <end position="23"/>
    </location>
</feature>
<feature type="short sequence motif" description="Histidine box-1">
    <location>
        <begin position="105"/>
        <end position="109"/>
    </location>
</feature>
<feature type="short sequence motif" description="Histidine box-2">
    <location>
        <begin position="141"/>
        <end position="145"/>
    </location>
</feature>
<feature type="short sequence motif" description="Histidine box-3">
    <location>
        <begin position="316"/>
        <end position="320"/>
    </location>
</feature>
<feature type="compositionally biased region" description="Basic and acidic residues" evidence="3">
    <location>
        <begin position="14"/>
        <end position="23"/>
    </location>
</feature>